<reference key="1">
    <citation type="journal article" date="2011" name="J. Bacteriol.">
        <title>Complete genome sequence of the Thermophilic Bacterium Exiguobacterium sp. AT1b.</title>
        <authorList>
            <person name="Vishnivetskaya T.A."/>
            <person name="Lucas S."/>
            <person name="Copeland A."/>
            <person name="Lapidus A."/>
            <person name="Glavina del Rio T."/>
            <person name="Dalin E."/>
            <person name="Tice H."/>
            <person name="Bruce D.C."/>
            <person name="Goodwin L.A."/>
            <person name="Pitluck S."/>
            <person name="Saunders E."/>
            <person name="Brettin T."/>
            <person name="Detter C."/>
            <person name="Han C."/>
            <person name="Larimer F."/>
            <person name="Land M.L."/>
            <person name="Hauser L.J."/>
            <person name="Kyrpides N.C."/>
            <person name="Ovchinnikova G."/>
            <person name="Kathariou S."/>
            <person name="Ramaley R.F."/>
            <person name="Rodrigues D.F."/>
            <person name="Hendrix C."/>
            <person name="Richardson P."/>
            <person name="Tiedje J.M."/>
        </authorList>
    </citation>
    <scope>NUCLEOTIDE SEQUENCE [LARGE SCALE GENOMIC DNA]</scope>
    <source>
        <strain>ATCC BAA-1283 / AT1b</strain>
    </source>
</reference>
<keyword id="KW-0067">ATP-binding</keyword>
<keyword id="KW-0963">Cytoplasm</keyword>
<keyword id="KW-0436">Ligase</keyword>
<keyword id="KW-0547">Nucleotide-binding</keyword>
<keyword id="KW-0658">Purine biosynthesis</keyword>
<name>PUR5_EXISA</name>
<comment type="catalytic activity">
    <reaction evidence="1">
        <text>2-formamido-N(1)-(5-O-phospho-beta-D-ribosyl)acetamidine + ATP = 5-amino-1-(5-phospho-beta-D-ribosyl)imidazole + ADP + phosphate + H(+)</text>
        <dbReference type="Rhea" id="RHEA:23032"/>
        <dbReference type="ChEBI" id="CHEBI:15378"/>
        <dbReference type="ChEBI" id="CHEBI:30616"/>
        <dbReference type="ChEBI" id="CHEBI:43474"/>
        <dbReference type="ChEBI" id="CHEBI:137981"/>
        <dbReference type="ChEBI" id="CHEBI:147287"/>
        <dbReference type="ChEBI" id="CHEBI:456216"/>
        <dbReference type="EC" id="6.3.3.1"/>
    </reaction>
</comment>
<comment type="pathway">
    <text evidence="1">Purine metabolism; IMP biosynthesis via de novo pathway; 5-amino-1-(5-phospho-D-ribosyl)imidazole from N(2)-formyl-N(1)-(5-phospho-D-ribosyl)glycinamide: step 2/2.</text>
</comment>
<comment type="subcellular location">
    <subcellularLocation>
        <location evidence="1">Cytoplasm</location>
    </subcellularLocation>
</comment>
<comment type="similarity">
    <text evidence="1">Belongs to the AIR synthase family.</text>
</comment>
<feature type="chain" id="PRO_1000212822" description="Phosphoribosylformylglycinamidine cyclo-ligase">
    <location>
        <begin position="1"/>
        <end position="344"/>
    </location>
</feature>
<sequence length="344" mass="36585">MSVRYEQAGVNLEAGYEAVSRMKRHVARTMRPEVMTGLGSFGAMIDLGSMNMKHPILVSGTDGVGTKLKLAFALDQHDTIGIDCVAMCVNDCLVHGAEPLYFLDYIATGKAEPAKLERIVAGVAEGCVQAGCALVGGETAEMPGMYPDGEYDIAGFAVGVVEKEDLLDGSTIQDGDVVLGLASSGVHSNGFSLVRHIVEAQGLHYTDEIAMLDTTLGNALLLPTRIYAEAAKAAISTGKVQGMAHITGGGFYENVPRMLPGGLGITFDASSWPSLPVFDWLEQVGNISKQEMFNVFNMGIGYMITVRAEDVELVEAALERVGETAHRIGKVESRPGIRISGVDQ</sequence>
<dbReference type="EC" id="6.3.3.1" evidence="1"/>
<dbReference type="EMBL" id="CP001615">
    <property type="protein sequence ID" value="ACQ71153.1"/>
    <property type="molecule type" value="Genomic_DNA"/>
</dbReference>
<dbReference type="RefSeq" id="WP_015880712.1">
    <property type="nucleotide sequence ID" value="NC_012673.1"/>
</dbReference>
<dbReference type="SMR" id="C4L2A1"/>
<dbReference type="STRING" id="360911.EAT1b_2231"/>
<dbReference type="KEGG" id="eat:EAT1b_2231"/>
<dbReference type="eggNOG" id="COG0150">
    <property type="taxonomic scope" value="Bacteria"/>
</dbReference>
<dbReference type="HOGENOM" id="CLU_047116_0_0_9"/>
<dbReference type="OrthoDB" id="9802507at2"/>
<dbReference type="UniPathway" id="UPA00074">
    <property type="reaction ID" value="UER00129"/>
</dbReference>
<dbReference type="Proteomes" id="UP000000716">
    <property type="component" value="Chromosome"/>
</dbReference>
<dbReference type="GO" id="GO:0005829">
    <property type="term" value="C:cytosol"/>
    <property type="evidence" value="ECO:0007669"/>
    <property type="project" value="TreeGrafter"/>
</dbReference>
<dbReference type="GO" id="GO:0005524">
    <property type="term" value="F:ATP binding"/>
    <property type="evidence" value="ECO:0007669"/>
    <property type="project" value="UniProtKB-KW"/>
</dbReference>
<dbReference type="GO" id="GO:0004637">
    <property type="term" value="F:phosphoribosylamine-glycine ligase activity"/>
    <property type="evidence" value="ECO:0007669"/>
    <property type="project" value="TreeGrafter"/>
</dbReference>
<dbReference type="GO" id="GO:0004641">
    <property type="term" value="F:phosphoribosylformylglycinamidine cyclo-ligase activity"/>
    <property type="evidence" value="ECO:0007669"/>
    <property type="project" value="UniProtKB-UniRule"/>
</dbReference>
<dbReference type="GO" id="GO:0006189">
    <property type="term" value="P:'de novo' IMP biosynthetic process"/>
    <property type="evidence" value="ECO:0007669"/>
    <property type="project" value="UniProtKB-UniRule"/>
</dbReference>
<dbReference type="GO" id="GO:0046084">
    <property type="term" value="P:adenine biosynthetic process"/>
    <property type="evidence" value="ECO:0007669"/>
    <property type="project" value="TreeGrafter"/>
</dbReference>
<dbReference type="CDD" id="cd02196">
    <property type="entry name" value="PurM"/>
    <property type="match status" value="1"/>
</dbReference>
<dbReference type="FunFam" id="3.30.1330.10:FF:000001">
    <property type="entry name" value="Phosphoribosylformylglycinamidine cyclo-ligase"/>
    <property type="match status" value="1"/>
</dbReference>
<dbReference type="FunFam" id="3.90.650.10:FF:000011">
    <property type="entry name" value="Phosphoribosylformylglycinamidine cyclo-ligase"/>
    <property type="match status" value="1"/>
</dbReference>
<dbReference type="Gene3D" id="3.90.650.10">
    <property type="entry name" value="PurM-like C-terminal domain"/>
    <property type="match status" value="1"/>
</dbReference>
<dbReference type="Gene3D" id="3.30.1330.10">
    <property type="entry name" value="PurM-like, N-terminal domain"/>
    <property type="match status" value="1"/>
</dbReference>
<dbReference type="HAMAP" id="MF_00741">
    <property type="entry name" value="AIRS"/>
    <property type="match status" value="1"/>
</dbReference>
<dbReference type="InterPro" id="IPR010918">
    <property type="entry name" value="PurM-like_C_dom"/>
</dbReference>
<dbReference type="InterPro" id="IPR036676">
    <property type="entry name" value="PurM-like_C_sf"/>
</dbReference>
<dbReference type="InterPro" id="IPR016188">
    <property type="entry name" value="PurM-like_N"/>
</dbReference>
<dbReference type="InterPro" id="IPR036921">
    <property type="entry name" value="PurM-like_N_sf"/>
</dbReference>
<dbReference type="InterPro" id="IPR004733">
    <property type="entry name" value="PurM_cligase"/>
</dbReference>
<dbReference type="NCBIfam" id="TIGR00878">
    <property type="entry name" value="purM"/>
    <property type="match status" value="1"/>
</dbReference>
<dbReference type="PANTHER" id="PTHR10520:SF12">
    <property type="entry name" value="TRIFUNCTIONAL PURINE BIOSYNTHETIC PROTEIN ADENOSINE-3"/>
    <property type="match status" value="1"/>
</dbReference>
<dbReference type="PANTHER" id="PTHR10520">
    <property type="entry name" value="TRIFUNCTIONAL PURINE BIOSYNTHETIC PROTEIN ADENOSINE-3-RELATED"/>
    <property type="match status" value="1"/>
</dbReference>
<dbReference type="Pfam" id="PF00586">
    <property type="entry name" value="AIRS"/>
    <property type="match status" value="1"/>
</dbReference>
<dbReference type="Pfam" id="PF02769">
    <property type="entry name" value="AIRS_C"/>
    <property type="match status" value="1"/>
</dbReference>
<dbReference type="SUPFAM" id="SSF56042">
    <property type="entry name" value="PurM C-terminal domain-like"/>
    <property type="match status" value="1"/>
</dbReference>
<dbReference type="SUPFAM" id="SSF55326">
    <property type="entry name" value="PurM N-terminal domain-like"/>
    <property type="match status" value="1"/>
</dbReference>
<accession>C4L2A1</accession>
<proteinExistence type="inferred from homology"/>
<evidence type="ECO:0000255" key="1">
    <source>
        <dbReference type="HAMAP-Rule" id="MF_00741"/>
    </source>
</evidence>
<organism>
    <name type="scientific">Exiguobacterium sp. (strain ATCC BAA-1283 / AT1b)</name>
    <dbReference type="NCBI Taxonomy" id="360911"/>
    <lineage>
        <taxon>Bacteria</taxon>
        <taxon>Bacillati</taxon>
        <taxon>Bacillota</taxon>
        <taxon>Bacilli</taxon>
        <taxon>Bacillales</taxon>
        <taxon>Bacillales Family XII. Incertae Sedis</taxon>
        <taxon>Exiguobacterium</taxon>
    </lineage>
</organism>
<protein>
    <recommendedName>
        <fullName evidence="1">Phosphoribosylformylglycinamidine cyclo-ligase</fullName>
        <ecNumber evidence="1">6.3.3.1</ecNumber>
    </recommendedName>
    <alternativeName>
        <fullName evidence="1">AIR synthase</fullName>
    </alternativeName>
    <alternativeName>
        <fullName evidence="1">AIRS</fullName>
    </alternativeName>
    <alternativeName>
        <fullName evidence="1">Phosphoribosyl-aminoimidazole synthetase</fullName>
    </alternativeName>
</protein>
<gene>
    <name evidence="1" type="primary">purM</name>
    <name type="ordered locus">EAT1b_2231</name>
</gene>